<comment type="function">
    <text>Cadherins are calcium-dependent cell adhesion proteins. They preferentially interact with themselves in a homophilic manner in connecting cells; cadherins may thus contribute to the sorting of heterogeneous cell types.</text>
</comment>
<comment type="interaction">
    <interactant intactId="EBI-2837263">
        <id>O75309</id>
    </interactant>
    <interactant intactId="EBI-2432309">
        <id>Q92876</id>
        <label>KLK6</label>
    </interactant>
    <organismsDiffer>false</organismsDiffer>
    <experiments>3</experiments>
</comment>
<comment type="subcellular location">
    <subcellularLocation>
        <location evidence="8">Cell membrane</location>
        <topology evidence="8">Single-pass type I membrane protein</topology>
    </subcellularLocation>
</comment>
<comment type="alternative products">
    <event type="alternative splicing"/>
    <isoform>
        <id>O75309-1</id>
        <name>1</name>
        <sequence type="displayed"/>
    </isoform>
    <isoform>
        <id>O75309-2</id>
        <name>2</name>
        <sequence type="described" ref="VSP_013354"/>
    </isoform>
    <isoform>
        <id>O75309-3</id>
        <name>3</name>
        <sequence type="described" ref="VSP_046027"/>
    </isoform>
    <isoform>
        <id>O75309-4</id>
        <name>4</name>
        <sequence type="described" ref="VSP_046467"/>
    </isoform>
</comment>
<comment type="tissue specificity">
    <text>Kidney specific.</text>
</comment>
<comment type="domain">
    <text evidence="1">Three calcium ions are usually bound at the interface of each cadherin domain and rigidify the connections, imparting a strong curvature to the full-length ectodomain.</text>
</comment>
<gene>
    <name type="primary">CDH16</name>
    <name type="ORF">UNQ695/PRO1340</name>
</gene>
<sequence>MVPAWLWLLCVSVPQALPKAQPAELSVEVPENYGGNFPLYLTKLPLPREGAEGQIVLSGDSGKATEGPFAMDPDSGFLLVTRALDREEQAEYQLQVTLEMQDGHVLWGPQPVLVHVKDENDQVPHFSQAIYRARLSRGTRPGIPFLFLEASDRDEPGTANSDLRFHILSQAPAQPSPDMFQLEPRLGALALSPKGSTSLDHALERTYQLLVQVKDMGDQASGHQATATVEVSIIESTWVSLEPIHLAENLKVLYPHHMAQVHWSGGDVHYHLESHPPGPFEVNAEGNLYVTRELDREAQAEYLLQVRAQNSHGEDYAAPLELHVLVMDENDNVPICPPRDPTVSIPELSPPGTEVTRLSAEDADAPGSPNSHVVYQLLSPEPEDGVEGRAFQVDPTSGSVTLGVLPLRAGQNILLLVLAMDLAGAEGGFSSTCEVEVAVTDINDHAPEFITSQIGPISLPEDVEPGTLVAMLTAIDADLEPAFRLMDFAIERGDTEGTFGLDWEPDSGHVRLRLCKNLSYEAAPSHEVVVVVQSVAKLVGPGPGPGATATVTVLVERVMPPPKLDQESYEASVPISAPAGSFLLTIQPSDPISRTLRFSLVNDSEGWLCIEKFSGEVHTAQSLQGAQPGDTYTVLVEAQDTDEPRLSASAPLVIHFLKAPPAPALTLAPVPSQYLCTPRQDHGLIVSGPSKDPDLASGHGPYSFTLGPNPTVQRDWRLQTLNGSHAYLTLALHWVEPREHIIPVVVSHNAQMWQLLVRVIVCRCNVEGQCMRKVGRMKGMPTKLSAVGILVGTLVAIGIFLILIFTHWTMSRKKDPDQPADSVPLKATV</sequence>
<accession>O75309</accession>
<accession>B4DPA8</accession>
<accession>H3BPD3</accession>
<accession>Q6UW93</accession>
<organism>
    <name type="scientific">Homo sapiens</name>
    <name type="common">Human</name>
    <dbReference type="NCBI Taxonomy" id="9606"/>
    <lineage>
        <taxon>Eukaryota</taxon>
        <taxon>Metazoa</taxon>
        <taxon>Chordata</taxon>
        <taxon>Craniata</taxon>
        <taxon>Vertebrata</taxon>
        <taxon>Euteleostomi</taxon>
        <taxon>Mammalia</taxon>
        <taxon>Eutheria</taxon>
        <taxon>Euarchontoglires</taxon>
        <taxon>Primates</taxon>
        <taxon>Haplorrhini</taxon>
        <taxon>Catarrhini</taxon>
        <taxon>Hominidae</taxon>
        <taxon>Homo</taxon>
    </lineage>
</organism>
<reference key="1">
    <citation type="journal article" date="1998" name="Genomics">
        <title>cDNA cloning and chromosomal localization of the human and mouse isoforms of Ksp-cadherin.</title>
        <authorList>
            <person name="Thomson R.B."/>
            <person name="Ward D.C."/>
            <person name="Quaggin S.E."/>
            <person name="Igarashi P."/>
            <person name="Muckler Z.E."/>
            <person name="Aronson P.S."/>
        </authorList>
    </citation>
    <scope>NUCLEOTIDE SEQUENCE [MRNA] (ISOFORM 1)</scope>
</reference>
<reference key="2">
    <citation type="journal article" date="2003" name="Genome Res.">
        <title>The secreted protein discovery initiative (SPDI), a large-scale effort to identify novel human secreted and transmembrane proteins: a bioinformatics assessment.</title>
        <authorList>
            <person name="Clark H.F."/>
            <person name="Gurney A.L."/>
            <person name="Abaya E."/>
            <person name="Baker K."/>
            <person name="Baldwin D.T."/>
            <person name="Brush J."/>
            <person name="Chen J."/>
            <person name="Chow B."/>
            <person name="Chui C."/>
            <person name="Crowley C."/>
            <person name="Currell B."/>
            <person name="Deuel B."/>
            <person name="Dowd P."/>
            <person name="Eaton D."/>
            <person name="Foster J.S."/>
            <person name="Grimaldi C."/>
            <person name="Gu Q."/>
            <person name="Hass P.E."/>
            <person name="Heldens S."/>
            <person name="Huang A."/>
            <person name="Kim H.S."/>
            <person name="Klimowski L."/>
            <person name="Jin Y."/>
            <person name="Johnson S."/>
            <person name="Lee J."/>
            <person name="Lewis L."/>
            <person name="Liao D."/>
            <person name="Mark M.R."/>
            <person name="Robbie E."/>
            <person name="Sanchez C."/>
            <person name="Schoenfeld J."/>
            <person name="Seshagiri S."/>
            <person name="Simmons L."/>
            <person name="Singh J."/>
            <person name="Smith V."/>
            <person name="Stinson J."/>
            <person name="Vagts A."/>
            <person name="Vandlen R.L."/>
            <person name="Watanabe C."/>
            <person name="Wieand D."/>
            <person name="Woods K."/>
            <person name="Xie M.-H."/>
            <person name="Yansura D.G."/>
            <person name="Yi S."/>
            <person name="Yu G."/>
            <person name="Yuan J."/>
            <person name="Zhang M."/>
            <person name="Zhang Z."/>
            <person name="Goddard A.D."/>
            <person name="Wood W.I."/>
            <person name="Godowski P.J."/>
            <person name="Gray A.M."/>
        </authorList>
    </citation>
    <scope>NUCLEOTIDE SEQUENCE [LARGE SCALE MRNA] (ISOFORM 2)</scope>
</reference>
<reference key="3">
    <citation type="journal article" date="2004" name="Nat. Genet.">
        <title>Complete sequencing and characterization of 21,243 full-length human cDNAs.</title>
        <authorList>
            <person name="Ota T."/>
            <person name="Suzuki Y."/>
            <person name="Nishikawa T."/>
            <person name="Otsuki T."/>
            <person name="Sugiyama T."/>
            <person name="Irie R."/>
            <person name="Wakamatsu A."/>
            <person name="Hayashi K."/>
            <person name="Sato H."/>
            <person name="Nagai K."/>
            <person name="Kimura K."/>
            <person name="Makita H."/>
            <person name="Sekine M."/>
            <person name="Obayashi M."/>
            <person name="Nishi T."/>
            <person name="Shibahara T."/>
            <person name="Tanaka T."/>
            <person name="Ishii S."/>
            <person name="Yamamoto J."/>
            <person name="Saito K."/>
            <person name="Kawai Y."/>
            <person name="Isono Y."/>
            <person name="Nakamura Y."/>
            <person name="Nagahari K."/>
            <person name="Murakami K."/>
            <person name="Yasuda T."/>
            <person name="Iwayanagi T."/>
            <person name="Wagatsuma M."/>
            <person name="Shiratori A."/>
            <person name="Sudo H."/>
            <person name="Hosoiri T."/>
            <person name="Kaku Y."/>
            <person name="Kodaira H."/>
            <person name="Kondo H."/>
            <person name="Sugawara M."/>
            <person name="Takahashi M."/>
            <person name="Kanda K."/>
            <person name="Yokoi T."/>
            <person name="Furuya T."/>
            <person name="Kikkawa E."/>
            <person name="Omura Y."/>
            <person name="Abe K."/>
            <person name="Kamihara K."/>
            <person name="Katsuta N."/>
            <person name="Sato K."/>
            <person name="Tanikawa M."/>
            <person name="Yamazaki M."/>
            <person name="Ninomiya K."/>
            <person name="Ishibashi T."/>
            <person name="Yamashita H."/>
            <person name="Murakawa K."/>
            <person name="Fujimori K."/>
            <person name="Tanai H."/>
            <person name="Kimata M."/>
            <person name="Watanabe M."/>
            <person name="Hiraoka S."/>
            <person name="Chiba Y."/>
            <person name="Ishida S."/>
            <person name="Ono Y."/>
            <person name="Takiguchi S."/>
            <person name="Watanabe S."/>
            <person name="Yosida M."/>
            <person name="Hotuta T."/>
            <person name="Kusano J."/>
            <person name="Kanehori K."/>
            <person name="Takahashi-Fujii A."/>
            <person name="Hara H."/>
            <person name="Tanase T.-O."/>
            <person name="Nomura Y."/>
            <person name="Togiya S."/>
            <person name="Komai F."/>
            <person name="Hara R."/>
            <person name="Takeuchi K."/>
            <person name="Arita M."/>
            <person name="Imose N."/>
            <person name="Musashino K."/>
            <person name="Yuuki H."/>
            <person name="Oshima A."/>
            <person name="Sasaki N."/>
            <person name="Aotsuka S."/>
            <person name="Yoshikawa Y."/>
            <person name="Matsunawa H."/>
            <person name="Ichihara T."/>
            <person name="Shiohata N."/>
            <person name="Sano S."/>
            <person name="Moriya S."/>
            <person name="Momiyama H."/>
            <person name="Satoh N."/>
            <person name="Takami S."/>
            <person name="Terashima Y."/>
            <person name="Suzuki O."/>
            <person name="Nakagawa S."/>
            <person name="Senoh A."/>
            <person name="Mizoguchi H."/>
            <person name="Goto Y."/>
            <person name="Shimizu F."/>
            <person name="Wakebe H."/>
            <person name="Hishigaki H."/>
            <person name="Watanabe T."/>
            <person name="Sugiyama A."/>
            <person name="Takemoto M."/>
            <person name="Kawakami B."/>
            <person name="Yamazaki M."/>
            <person name="Watanabe K."/>
            <person name="Kumagai A."/>
            <person name="Itakura S."/>
            <person name="Fukuzumi Y."/>
            <person name="Fujimori Y."/>
            <person name="Komiyama M."/>
            <person name="Tashiro H."/>
            <person name="Tanigami A."/>
            <person name="Fujiwara T."/>
            <person name="Ono T."/>
            <person name="Yamada K."/>
            <person name="Fujii Y."/>
            <person name="Ozaki K."/>
            <person name="Hirao M."/>
            <person name="Ohmori Y."/>
            <person name="Kawabata A."/>
            <person name="Hikiji T."/>
            <person name="Kobatake N."/>
            <person name="Inagaki H."/>
            <person name="Ikema Y."/>
            <person name="Okamoto S."/>
            <person name="Okitani R."/>
            <person name="Kawakami T."/>
            <person name="Noguchi S."/>
            <person name="Itoh T."/>
            <person name="Shigeta K."/>
            <person name="Senba T."/>
            <person name="Matsumura K."/>
            <person name="Nakajima Y."/>
            <person name="Mizuno T."/>
            <person name="Morinaga M."/>
            <person name="Sasaki M."/>
            <person name="Togashi T."/>
            <person name="Oyama M."/>
            <person name="Hata H."/>
            <person name="Watanabe M."/>
            <person name="Komatsu T."/>
            <person name="Mizushima-Sugano J."/>
            <person name="Satoh T."/>
            <person name="Shirai Y."/>
            <person name="Takahashi Y."/>
            <person name="Nakagawa K."/>
            <person name="Okumura K."/>
            <person name="Nagase T."/>
            <person name="Nomura N."/>
            <person name="Kikuchi H."/>
            <person name="Masuho Y."/>
            <person name="Yamashita R."/>
            <person name="Nakai K."/>
            <person name="Yada T."/>
            <person name="Nakamura Y."/>
            <person name="Ohara O."/>
            <person name="Isogai T."/>
            <person name="Sugano S."/>
        </authorList>
    </citation>
    <scope>NUCLEOTIDE SEQUENCE [LARGE SCALE MRNA] (ISOFORM 4)</scope>
    <source>
        <tissue>Kidney</tissue>
    </source>
</reference>
<reference key="4">
    <citation type="submission" date="2006-07" db="EMBL/GenBank/DDBJ databases">
        <authorList>
            <person name="Suzuki Y."/>
            <person name="Sugano S."/>
            <person name="Totoki Y."/>
            <person name="Toyoda A."/>
            <person name="Takeda T."/>
            <person name="Sakaki Y."/>
            <person name="Tanaka A."/>
            <person name="Yokoyama S."/>
        </authorList>
    </citation>
    <scope>NUCLEOTIDE SEQUENCE [LARGE SCALE MRNA] (ISOFORM 3)</scope>
    <source>
        <tissue>Kidney</tissue>
    </source>
</reference>
<reference key="5">
    <citation type="journal article" date="2004" name="Nature">
        <title>The sequence and analysis of duplication-rich human chromosome 16.</title>
        <authorList>
            <person name="Martin J."/>
            <person name="Han C."/>
            <person name="Gordon L.A."/>
            <person name="Terry A."/>
            <person name="Prabhakar S."/>
            <person name="She X."/>
            <person name="Xie G."/>
            <person name="Hellsten U."/>
            <person name="Chan Y.M."/>
            <person name="Altherr M."/>
            <person name="Couronne O."/>
            <person name="Aerts A."/>
            <person name="Bajorek E."/>
            <person name="Black S."/>
            <person name="Blumer H."/>
            <person name="Branscomb E."/>
            <person name="Brown N.C."/>
            <person name="Bruno W.J."/>
            <person name="Buckingham J.M."/>
            <person name="Callen D.F."/>
            <person name="Campbell C.S."/>
            <person name="Campbell M.L."/>
            <person name="Campbell E.W."/>
            <person name="Caoile C."/>
            <person name="Challacombe J.F."/>
            <person name="Chasteen L.A."/>
            <person name="Chertkov O."/>
            <person name="Chi H.C."/>
            <person name="Christensen M."/>
            <person name="Clark L.M."/>
            <person name="Cohn J.D."/>
            <person name="Denys M."/>
            <person name="Detter J.C."/>
            <person name="Dickson M."/>
            <person name="Dimitrijevic-Bussod M."/>
            <person name="Escobar J."/>
            <person name="Fawcett J.J."/>
            <person name="Flowers D."/>
            <person name="Fotopulos D."/>
            <person name="Glavina T."/>
            <person name="Gomez M."/>
            <person name="Gonzales E."/>
            <person name="Goodstein D."/>
            <person name="Goodwin L.A."/>
            <person name="Grady D.L."/>
            <person name="Grigoriev I."/>
            <person name="Groza M."/>
            <person name="Hammon N."/>
            <person name="Hawkins T."/>
            <person name="Haydu L."/>
            <person name="Hildebrand C.E."/>
            <person name="Huang W."/>
            <person name="Israni S."/>
            <person name="Jett J."/>
            <person name="Jewett P.B."/>
            <person name="Kadner K."/>
            <person name="Kimball H."/>
            <person name="Kobayashi A."/>
            <person name="Krawczyk M.-C."/>
            <person name="Leyba T."/>
            <person name="Longmire J.L."/>
            <person name="Lopez F."/>
            <person name="Lou Y."/>
            <person name="Lowry S."/>
            <person name="Ludeman T."/>
            <person name="Manohar C.F."/>
            <person name="Mark G.A."/>
            <person name="McMurray K.L."/>
            <person name="Meincke L.J."/>
            <person name="Morgan J."/>
            <person name="Moyzis R.K."/>
            <person name="Mundt M.O."/>
            <person name="Munk A.C."/>
            <person name="Nandkeshwar R.D."/>
            <person name="Pitluck S."/>
            <person name="Pollard M."/>
            <person name="Predki P."/>
            <person name="Parson-Quintana B."/>
            <person name="Ramirez L."/>
            <person name="Rash S."/>
            <person name="Retterer J."/>
            <person name="Ricke D.O."/>
            <person name="Robinson D.L."/>
            <person name="Rodriguez A."/>
            <person name="Salamov A."/>
            <person name="Saunders E.H."/>
            <person name="Scott D."/>
            <person name="Shough T."/>
            <person name="Stallings R.L."/>
            <person name="Stalvey M."/>
            <person name="Sutherland R.D."/>
            <person name="Tapia R."/>
            <person name="Tesmer J.G."/>
            <person name="Thayer N."/>
            <person name="Thompson L.S."/>
            <person name="Tice H."/>
            <person name="Torney D.C."/>
            <person name="Tran-Gyamfi M."/>
            <person name="Tsai M."/>
            <person name="Ulanovsky L.E."/>
            <person name="Ustaszewska A."/>
            <person name="Vo N."/>
            <person name="White P.S."/>
            <person name="Williams A.L."/>
            <person name="Wills P.L."/>
            <person name="Wu J.-R."/>
            <person name="Wu K."/>
            <person name="Yang J."/>
            <person name="DeJong P."/>
            <person name="Bruce D."/>
            <person name="Doggett N.A."/>
            <person name="Deaven L."/>
            <person name="Schmutz J."/>
            <person name="Grimwood J."/>
            <person name="Richardson P."/>
            <person name="Rokhsar D.S."/>
            <person name="Eichler E.E."/>
            <person name="Gilna P."/>
            <person name="Lucas S.M."/>
            <person name="Myers R.M."/>
            <person name="Rubin E.M."/>
            <person name="Pennacchio L.A."/>
        </authorList>
    </citation>
    <scope>NUCLEOTIDE SEQUENCE [LARGE SCALE GENOMIC DNA]</scope>
</reference>
<reference key="6">
    <citation type="journal article" date="2004" name="Genome Res.">
        <title>The status, quality, and expansion of the NIH full-length cDNA project: the Mammalian Gene Collection (MGC).</title>
        <authorList>
            <consortium name="The MGC Project Team"/>
        </authorList>
    </citation>
    <scope>NUCLEOTIDE SEQUENCE [LARGE SCALE MRNA] (ISOFORM 1)</scope>
    <source>
        <tissue>Lung</tissue>
        <tissue>Spleen</tissue>
    </source>
</reference>
<keyword id="KW-0025">Alternative splicing</keyword>
<keyword id="KW-0106">Calcium</keyword>
<keyword id="KW-0130">Cell adhesion</keyword>
<keyword id="KW-1003">Cell membrane</keyword>
<keyword id="KW-0325">Glycoprotein</keyword>
<keyword id="KW-0472">Membrane</keyword>
<keyword id="KW-0479">Metal-binding</keyword>
<keyword id="KW-0597">Phosphoprotein</keyword>
<keyword id="KW-1267">Proteomics identification</keyword>
<keyword id="KW-1185">Reference proteome</keyword>
<keyword id="KW-0677">Repeat</keyword>
<keyword id="KW-0732">Signal</keyword>
<keyword id="KW-0812">Transmembrane</keyword>
<keyword id="KW-1133">Transmembrane helix</keyword>
<evidence type="ECO:0000250" key="1"/>
<evidence type="ECO:0000250" key="2">
    <source>
        <dbReference type="UniProtKB" id="O88338"/>
    </source>
</evidence>
<evidence type="ECO:0000255" key="3"/>
<evidence type="ECO:0000255" key="4">
    <source>
        <dbReference type="PROSITE-ProRule" id="PRU00043"/>
    </source>
</evidence>
<evidence type="ECO:0000303" key="5">
    <source>
    </source>
</evidence>
<evidence type="ECO:0000303" key="6">
    <source>
    </source>
</evidence>
<evidence type="ECO:0000303" key="7">
    <source ref="4"/>
</evidence>
<evidence type="ECO:0000305" key="8"/>
<feature type="signal peptide" evidence="3">
    <location>
        <begin position="1"/>
        <end position="18"/>
    </location>
</feature>
<feature type="chain" id="PRO_0000003809" description="Cadherin-16">
    <location>
        <begin position="19"/>
        <end position="829"/>
    </location>
</feature>
<feature type="topological domain" description="Extracellular" evidence="3">
    <location>
        <begin position="19"/>
        <end position="786"/>
    </location>
</feature>
<feature type="transmembrane region" description="Helical" evidence="3">
    <location>
        <begin position="787"/>
        <end position="807"/>
    </location>
</feature>
<feature type="topological domain" description="Cytoplasmic" evidence="3">
    <location>
        <begin position="808"/>
        <end position="829"/>
    </location>
</feature>
<feature type="domain" description="Cadherin 1" evidence="4">
    <location>
        <begin position="25"/>
        <end position="126"/>
    </location>
</feature>
<feature type="domain" description="Cadherin 2" evidence="4">
    <location>
        <begin position="131"/>
        <end position="235"/>
    </location>
</feature>
<feature type="domain" description="Cadherin 3" evidence="4">
    <location>
        <begin position="242"/>
        <end position="336"/>
    </location>
</feature>
<feature type="domain" description="Cadherin 4" evidence="4">
    <location>
        <begin position="341"/>
        <end position="449"/>
    </location>
</feature>
<feature type="domain" description="Cadherin 5" evidence="4">
    <location>
        <begin position="455"/>
        <end position="564"/>
    </location>
</feature>
<feature type="domain" description="Cadherin 6" evidence="4">
    <location>
        <begin position="569"/>
        <end position="665"/>
    </location>
</feature>
<feature type="region of interest" description="Ectodomain G">
    <location>
        <begin position="666"/>
        <end position="786"/>
    </location>
</feature>
<feature type="modified residue" description="Phosphoserine" evidence="2">
    <location>
        <position position="822"/>
    </location>
</feature>
<feature type="glycosylation site" description="N-linked (GlcNAc...) asparagine" evidence="3">
    <location>
        <position position="517"/>
    </location>
</feature>
<feature type="glycosylation site" description="N-linked (GlcNAc...) asparagine" evidence="3">
    <location>
        <position position="602"/>
    </location>
</feature>
<feature type="glycosylation site" description="N-linked (GlcNAc...) asparagine" evidence="3">
    <location>
        <position position="722"/>
    </location>
</feature>
<feature type="splice variant" id="VSP_046027" description="In isoform 3." evidence="7">
    <location>
        <begin position="121"/>
        <end position="217"/>
    </location>
</feature>
<feature type="splice variant" id="VSP_046467" description="In isoform 4." evidence="6">
    <location>
        <begin position="642"/>
        <end position="680"/>
    </location>
</feature>
<feature type="splice variant" id="VSP_013354" description="In isoform 2." evidence="5">
    <location>
        <begin position="642"/>
        <end position="663"/>
    </location>
</feature>
<feature type="sequence variant" id="VAR_021870" description="In dbSNP:rs2271024.">
    <original>L</original>
    <variation>F</variation>
    <location>
        <position position="191"/>
    </location>
</feature>
<feature type="sequence variant" id="VAR_021871" description="In dbSNP:rs2271023.">
    <original>H</original>
    <variation>Y</variation>
    <location>
        <position position="257"/>
    </location>
</feature>
<feature type="sequence variant" id="VAR_061058" description="In dbSNP:rs34621310.">
    <original>R</original>
    <variation>H</variation>
    <location>
        <position position="717"/>
    </location>
</feature>
<protein>
    <recommendedName>
        <fullName>Cadherin-16</fullName>
    </recommendedName>
    <alternativeName>
        <fullName>Kidney-specific cadherin</fullName>
        <shortName>Ksp-cadherin</shortName>
    </alternativeName>
</protein>
<name>CAD16_HUMAN</name>
<dbReference type="EMBL" id="AF016272">
    <property type="protein sequence ID" value="AAC34255.1"/>
    <property type="molecule type" value="mRNA"/>
</dbReference>
<dbReference type="EMBL" id="AY358911">
    <property type="protein sequence ID" value="AAQ89270.1"/>
    <property type="molecule type" value="mRNA"/>
</dbReference>
<dbReference type="EMBL" id="AK225544">
    <property type="status" value="NOT_ANNOTATED_CDS"/>
    <property type="molecule type" value="mRNA"/>
</dbReference>
<dbReference type="EMBL" id="AK298255">
    <property type="protein sequence ID" value="BAG60520.1"/>
    <property type="molecule type" value="mRNA"/>
</dbReference>
<dbReference type="EMBL" id="AC009084">
    <property type="status" value="NOT_ANNOTATED_CDS"/>
    <property type="molecule type" value="Genomic_DNA"/>
</dbReference>
<dbReference type="EMBL" id="BC027912">
    <property type="protein sequence ID" value="AAH27912.1"/>
    <property type="molecule type" value="mRNA"/>
</dbReference>
<dbReference type="CCDS" id="CCDS10823.1">
    <molecule id="O75309-1"/>
</dbReference>
<dbReference type="CCDS" id="CCDS56002.1">
    <molecule id="O75309-2"/>
</dbReference>
<dbReference type="CCDS" id="CCDS58471.1">
    <molecule id="O75309-4"/>
</dbReference>
<dbReference type="CCDS" id="CCDS58472.1">
    <molecule id="O75309-3"/>
</dbReference>
<dbReference type="RefSeq" id="NP_001191673.1">
    <molecule id="O75309-2"/>
    <property type="nucleotide sequence ID" value="NM_001204744.2"/>
</dbReference>
<dbReference type="RefSeq" id="NP_001191674.1">
    <molecule id="O75309-4"/>
    <property type="nucleotide sequence ID" value="NM_001204745.2"/>
</dbReference>
<dbReference type="RefSeq" id="NP_001191675.1">
    <molecule id="O75309-3"/>
    <property type="nucleotide sequence ID" value="NM_001204746.2"/>
</dbReference>
<dbReference type="RefSeq" id="NP_004053.1">
    <molecule id="O75309-1"/>
    <property type="nucleotide sequence ID" value="NM_004062.4"/>
</dbReference>
<dbReference type="SMR" id="O75309"/>
<dbReference type="BioGRID" id="107449">
    <property type="interactions" value="31"/>
</dbReference>
<dbReference type="FunCoup" id="O75309">
    <property type="interactions" value="37"/>
</dbReference>
<dbReference type="IntAct" id="O75309">
    <property type="interactions" value="27"/>
</dbReference>
<dbReference type="STRING" id="9606.ENSP00000299752"/>
<dbReference type="GlyCosmos" id="O75309">
    <property type="glycosylation" value="6 sites, 1 glycan"/>
</dbReference>
<dbReference type="GlyGen" id="O75309">
    <property type="glycosylation" value="7 sites, 1 O-linked glycan (3 sites)"/>
</dbReference>
<dbReference type="iPTMnet" id="O75309"/>
<dbReference type="PhosphoSitePlus" id="O75309"/>
<dbReference type="BioMuta" id="CDH16"/>
<dbReference type="MassIVE" id="O75309"/>
<dbReference type="PaxDb" id="9606-ENSP00000299752"/>
<dbReference type="PeptideAtlas" id="O75309"/>
<dbReference type="ProteomicsDB" id="41459"/>
<dbReference type="ProteomicsDB" id="4774"/>
<dbReference type="ProteomicsDB" id="49884">
    <molecule id="O75309-1"/>
</dbReference>
<dbReference type="ProteomicsDB" id="49885">
    <molecule id="O75309-2"/>
</dbReference>
<dbReference type="Antibodypedia" id="29333">
    <property type="antibodies" value="671 antibodies from 31 providers"/>
</dbReference>
<dbReference type="DNASU" id="1014"/>
<dbReference type="Ensembl" id="ENST00000299752.9">
    <molecule id="O75309-1"/>
    <property type="protein sequence ID" value="ENSP00000299752.4"/>
    <property type="gene ID" value="ENSG00000166589.13"/>
</dbReference>
<dbReference type="Ensembl" id="ENST00000394055.7">
    <molecule id="O75309-2"/>
    <property type="protein sequence ID" value="ENSP00000377619.3"/>
    <property type="gene ID" value="ENSG00000166589.13"/>
</dbReference>
<dbReference type="Ensembl" id="ENST00000565796.5">
    <molecule id="O75309-4"/>
    <property type="protein sequence ID" value="ENSP00000454784.1"/>
    <property type="gene ID" value="ENSG00000166589.13"/>
</dbReference>
<dbReference type="Ensembl" id="ENST00000568632.5">
    <molecule id="O75309-3"/>
    <property type="protein sequence ID" value="ENSP00000455263.1"/>
    <property type="gene ID" value="ENSG00000166589.13"/>
</dbReference>
<dbReference type="GeneID" id="1014"/>
<dbReference type="KEGG" id="hsa:1014"/>
<dbReference type="MANE-Select" id="ENST00000299752.9">
    <property type="protein sequence ID" value="ENSP00000299752.4"/>
    <property type="RefSeq nucleotide sequence ID" value="NM_004062.4"/>
    <property type="RefSeq protein sequence ID" value="NP_004053.1"/>
</dbReference>
<dbReference type="UCSC" id="uc002eql.3">
    <molecule id="O75309-1"/>
    <property type="organism name" value="human"/>
</dbReference>
<dbReference type="AGR" id="HGNC:1755"/>
<dbReference type="CTD" id="1014"/>
<dbReference type="DisGeNET" id="1014"/>
<dbReference type="GeneCards" id="CDH16"/>
<dbReference type="HGNC" id="HGNC:1755">
    <property type="gene designation" value="CDH16"/>
</dbReference>
<dbReference type="HPA" id="ENSG00000166589">
    <property type="expression patterns" value="Tissue enriched (kidney)"/>
</dbReference>
<dbReference type="MIM" id="603118">
    <property type="type" value="gene"/>
</dbReference>
<dbReference type="neXtProt" id="NX_O75309"/>
<dbReference type="OpenTargets" id="ENSG00000166589"/>
<dbReference type="PharmGKB" id="PA26289"/>
<dbReference type="VEuPathDB" id="HostDB:ENSG00000166589"/>
<dbReference type="eggNOG" id="KOG3594">
    <property type="taxonomic scope" value="Eukaryota"/>
</dbReference>
<dbReference type="GeneTree" id="ENSGT00940000161650"/>
<dbReference type="HOGENOM" id="CLU_016170_1_0_1"/>
<dbReference type="InParanoid" id="O75309"/>
<dbReference type="OMA" id="INLPTVC"/>
<dbReference type="OrthoDB" id="8804268at2759"/>
<dbReference type="PAN-GO" id="O75309">
    <property type="GO annotations" value="2 GO annotations based on evolutionary models"/>
</dbReference>
<dbReference type="PhylomeDB" id="O75309"/>
<dbReference type="TreeFam" id="TF316817"/>
<dbReference type="PathwayCommons" id="O75309"/>
<dbReference type="SignaLink" id="O75309"/>
<dbReference type="SIGNOR" id="O75309"/>
<dbReference type="BioGRID-ORCS" id="1014">
    <property type="hits" value="12 hits in 1146 CRISPR screens"/>
</dbReference>
<dbReference type="GeneWiki" id="CDH16"/>
<dbReference type="GenomeRNAi" id="1014"/>
<dbReference type="Pharos" id="O75309">
    <property type="development level" value="Tbio"/>
</dbReference>
<dbReference type="PRO" id="PR:O75309"/>
<dbReference type="Proteomes" id="UP000005640">
    <property type="component" value="Chromosome 16"/>
</dbReference>
<dbReference type="RNAct" id="O75309">
    <property type="molecule type" value="protein"/>
</dbReference>
<dbReference type="Bgee" id="ENSG00000166589">
    <property type="expression patterns" value="Expressed in metanephros cortex and 87 other cell types or tissues"/>
</dbReference>
<dbReference type="ExpressionAtlas" id="O75309">
    <property type="expression patterns" value="baseline and differential"/>
</dbReference>
<dbReference type="GO" id="GO:0016323">
    <property type="term" value="C:basolateral plasma membrane"/>
    <property type="evidence" value="ECO:0007669"/>
    <property type="project" value="Ensembl"/>
</dbReference>
<dbReference type="GO" id="GO:0070062">
    <property type="term" value="C:extracellular exosome"/>
    <property type="evidence" value="ECO:0007005"/>
    <property type="project" value="UniProtKB"/>
</dbReference>
<dbReference type="GO" id="GO:0005886">
    <property type="term" value="C:plasma membrane"/>
    <property type="evidence" value="ECO:0000318"/>
    <property type="project" value="GO_Central"/>
</dbReference>
<dbReference type="GO" id="GO:0005509">
    <property type="term" value="F:calcium ion binding"/>
    <property type="evidence" value="ECO:0007669"/>
    <property type="project" value="InterPro"/>
</dbReference>
<dbReference type="GO" id="GO:0016339">
    <property type="term" value="P:calcium-dependent cell-cell adhesion via plasma membrane cell adhesion molecules"/>
    <property type="evidence" value="ECO:0007669"/>
    <property type="project" value="Ensembl"/>
</dbReference>
<dbReference type="GO" id="GO:0007155">
    <property type="term" value="P:cell adhesion"/>
    <property type="evidence" value="ECO:0000318"/>
    <property type="project" value="GO_Central"/>
</dbReference>
<dbReference type="GO" id="GO:0007156">
    <property type="term" value="P:homophilic cell adhesion via plasma membrane adhesion molecules"/>
    <property type="evidence" value="ECO:0007669"/>
    <property type="project" value="InterPro"/>
</dbReference>
<dbReference type="CDD" id="cd11304">
    <property type="entry name" value="Cadherin_repeat"/>
    <property type="match status" value="6"/>
</dbReference>
<dbReference type="FunFam" id="2.60.40.60:FF:000167">
    <property type="entry name" value="Cadherin 16"/>
    <property type="match status" value="1"/>
</dbReference>
<dbReference type="FunFam" id="2.60.40.60:FF:000187">
    <property type="entry name" value="Cadherin 16"/>
    <property type="match status" value="1"/>
</dbReference>
<dbReference type="FunFam" id="2.60.40.60:FF:000195">
    <property type="entry name" value="Cadherin 16"/>
    <property type="match status" value="1"/>
</dbReference>
<dbReference type="FunFam" id="2.60.40.60:FF:000240">
    <property type="entry name" value="Cadherin 16"/>
    <property type="match status" value="1"/>
</dbReference>
<dbReference type="FunFam" id="2.60.40.60:FF:000241">
    <property type="entry name" value="Cadherin 16"/>
    <property type="match status" value="1"/>
</dbReference>
<dbReference type="FunFam" id="2.60.40.60:FF:000149">
    <property type="entry name" value="cadherin-16 isoform X1"/>
    <property type="match status" value="1"/>
</dbReference>
<dbReference type="FunFam" id="2.60.40.60:FF:000159">
    <property type="entry name" value="cadherin-16 isoform X1"/>
    <property type="match status" value="1"/>
</dbReference>
<dbReference type="Gene3D" id="2.60.40.60">
    <property type="entry name" value="Cadherins"/>
    <property type="match status" value="7"/>
</dbReference>
<dbReference type="InterPro" id="IPR039808">
    <property type="entry name" value="Cadherin"/>
</dbReference>
<dbReference type="InterPro" id="IPR002126">
    <property type="entry name" value="Cadherin-like_dom"/>
</dbReference>
<dbReference type="InterPro" id="IPR015919">
    <property type="entry name" value="Cadherin-like_sf"/>
</dbReference>
<dbReference type="InterPro" id="IPR020894">
    <property type="entry name" value="Cadherin_CS"/>
</dbReference>
<dbReference type="PANTHER" id="PTHR24027:SF424">
    <property type="entry name" value="CADHERIN-16 ISOFORM X3"/>
    <property type="match status" value="1"/>
</dbReference>
<dbReference type="PANTHER" id="PTHR24027">
    <property type="entry name" value="CADHERIN-23"/>
    <property type="match status" value="1"/>
</dbReference>
<dbReference type="Pfam" id="PF00028">
    <property type="entry name" value="Cadherin"/>
    <property type="match status" value="3"/>
</dbReference>
<dbReference type="PRINTS" id="PR00205">
    <property type="entry name" value="CADHERIN"/>
</dbReference>
<dbReference type="SMART" id="SM00112">
    <property type="entry name" value="CA"/>
    <property type="match status" value="6"/>
</dbReference>
<dbReference type="SUPFAM" id="SSF49313">
    <property type="entry name" value="Cadherin-like"/>
    <property type="match status" value="6"/>
</dbReference>
<dbReference type="PROSITE" id="PS00232">
    <property type="entry name" value="CADHERIN_1"/>
    <property type="match status" value="2"/>
</dbReference>
<dbReference type="PROSITE" id="PS50268">
    <property type="entry name" value="CADHERIN_2"/>
    <property type="match status" value="5"/>
</dbReference>
<proteinExistence type="evidence at protein level"/>